<dbReference type="EMBL" id="CP000730">
    <property type="protein sequence ID" value="ABX28419.1"/>
    <property type="molecule type" value="Genomic_DNA"/>
</dbReference>
<dbReference type="RefSeq" id="WP_000897044.1">
    <property type="nucleotide sequence ID" value="NC_010079.1"/>
</dbReference>
<dbReference type="SMR" id="A8YZJ3"/>
<dbReference type="GeneID" id="98344693"/>
<dbReference type="KEGG" id="sax:USA300HOU_0389"/>
<dbReference type="HOGENOM" id="CLU_148710_2_2_9"/>
<dbReference type="GO" id="GO:0022627">
    <property type="term" value="C:cytosolic small ribosomal subunit"/>
    <property type="evidence" value="ECO:0007669"/>
    <property type="project" value="TreeGrafter"/>
</dbReference>
<dbReference type="GO" id="GO:0070181">
    <property type="term" value="F:small ribosomal subunit rRNA binding"/>
    <property type="evidence" value="ECO:0007669"/>
    <property type="project" value="TreeGrafter"/>
</dbReference>
<dbReference type="GO" id="GO:0003735">
    <property type="term" value="F:structural constituent of ribosome"/>
    <property type="evidence" value="ECO:0007669"/>
    <property type="project" value="InterPro"/>
</dbReference>
<dbReference type="GO" id="GO:0006412">
    <property type="term" value="P:translation"/>
    <property type="evidence" value="ECO:0007669"/>
    <property type="project" value="UniProtKB-UniRule"/>
</dbReference>
<dbReference type="FunFam" id="4.10.640.10:FF:000003">
    <property type="entry name" value="30S ribosomal protein S18"/>
    <property type="match status" value="1"/>
</dbReference>
<dbReference type="Gene3D" id="4.10.640.10">
    <property type="entry name" value="Ribosomal protein S18"/>
    <property type="match status" value="1"/>
</dbReference>
<dbReference type="HAMAP" id="MF_00270">
    <property type="entry name" value="Ribosomal_bS18"/>
    <property type="match status" value="1"/>
</dbReference>
<dbReference type="InterPro" id="IPR001648">
    <property type="entry name" value="Ribosomal_bS18"/>
</dbReference>
<dbReference type="InterPro" id="IPR018275">
    <property type="entry name" value="Ribosomal_bS18_CS"/>
</dbReference>
<dbReference type="InterPro" id="IPR036870">
    <property type="entry name" value="Ribosomal_bS18_sf"/>
</dbReference>
<dbReference type="NCBIfam" id="TIGR00165">
    <property type="entry name" value="S18"/>
    <property type="match status" value="1"/>
</dbReference>
<dbReference type="PANTHER" id="PTHR13479">
    <property type="entry name" value="30S RIBOSOMAL PROTEIN S18"/>
    <property type="match status" value="1"/>
</dbReference>
<dbReference type="PANTHER" id="PTHR13479:SF40">
    <property type="entry name" value="SMALL RIBOSOMAL SUBUNIT PROTEIN BS18M"/>
    <property type="match status" value="1"/>
</dbReference>
<dbReference type="Pfam" id="PF01084">
    <property type="entry name" value="Ribosomal_S18"/>
    <property type="match status" value="1"/>
</dbReference>
<dbReference type="PRINTS" id="PR00974">
    <property type="entry name" value="RIBOSOMALS18"/>
</dbReference>
<dbReference type="SUPFAM" id="SSF46911">
    <property type="entry name" value="Ribosomal protein S18"/>
    <property type="match status" value="1"/>
</dbReference>
<dbReference type="PROSITE" id="PS00057">
    <property type="entry name" value="RIBOSOMAL_S18"/>
    <property type="match status" value="1"/>
</dbReference>
<reference key="1">
    <citation type="journal article" date="2007" name="BMC Microbiol.">
        <title>Subtle genetic changes enhance virulence of methicillin resistant and sensitive Staphylococcus aureus.</title>
        <authorList>
            <person name="Highlander S.K."/>
            <person name="Hulten K.G."/>
            <person name="Qin X."/>
            <person name="Jiang H."/>
            <person name="Yerrapragada S."/>
            <person name="Mason E.O. Jr."/>
            <person name="Shang Y."/>
            <person name="Williams T.M."/>
            <person name="Fortunov R.M."/>
            <person name="Liu Y."/>
            <person name="Igboeli O."/>
            <person name="Petrosino J."/>
            <person name="Tirumalai M."/>
            <person name="Uzman A."/>
            <person name="Fox G.E."/>
            <person name="Cardenas A.M."/>
            <person name="Muzny D.M."/>
            <person name="Hemphill L."/>
            <person name="Ding Y."/>
            <person name="Dugan S."/>
            <person name="Blyth P.R."/>
            <person name="Buhay C.J."/>
            <person name="Dinh H.H."/>
            <person name="Hawes A.C."/>
            <person name="Holder M."/>
            <person name="Kovar C.L."/>
            <person name="Lee S.L."/>
            <person name="Liu W."/>
            <person name="Nazareth L.V."/>
            <person name="Wang Q."/>
            <person name="Zhou J."/>
            <person name="Kaplan S.L."/>
            <person name="Weinstock G.M."/>
        </authorList>
    </citation>
    <scope>NUCLEOTIDE SEQUENCE [LARGE SCALE GENOMIC DNA]</scope>
    <source>
        <strain>USA300 / TCH1516</strain>
    </source>
</reference>
<comment type="function">
    <text evidence="1">Binds as a heterodimer with protein bS6 to the central domain of the 16S rRNA, where it helps stabilize the platform of the 30S subunit.</text>
</comment>
<comment type="subunit">
    <text evidence="1">Part of the 30S ribosomal subunit. Forms a tight heterodimer with protein bS6.</text>
</comment>
<comment type="similarity">
    <text evidence="1">Belongs to the bacterial ribosomal protein bS18 family.</text>
</comment>
<feature type="chain" id="PRO_1000078718" description="Small ribosomal subunit protein bS18">
    <location>
        <begin position="1"/>
        <end position="80"/>
    </location>
</feature>
<evidence type="ECO:0000255" key="1">
    <source>
        <dbReference type="HAMAP-Rule" id="MF_00270"/>
    </source>
</evidence>
<evidence type="ECO:0000305" key="2"/>
<keyword id="KW-0687">Ribonucleoprotein</keyword>
<keyword id="KW-0689">Ribosomal protein</keyword>
<keyword id="KW-0694">RNA-binding</keyword>
<keyword id="KW-0699">rRNA-binding</keyword>
<name>RS18_STAAT</name>
<accession>A8YZJ3</accession>
<gene>
    <name evidence="1" type="primary">rpsR</name>
    <name type="ordered locus">USA300HOU_0389</name>
</gene>
<proteinExistence type="inferred from homology"/>
<sequence>MAGGPRRGGRRRKKVCYFTANGITHIDYKDTELLKRFISERGKILPRRVTGTSAKYQRMLTTAIKRSRHMALLPYVKEEQ</sequence>
<organism>
    <name type="scientific">Staphylococcus aureus (strain USA300 / TCH1516)</name>
    <dbReference type="NCBI Taxonomy" id="451516"/>
    <lineage>
        <taxon>Bacteria</taxon>
        <taxon>Bacillati</taxon>
        <taxon>Bacillota</taxon>
        <taxon>Bacilli</taxon>
        <taxon>Bacillales</taxon>
        <taxon>Staphylococcaceae</taxon>
        <taxon>Staphylococcus</taxon>
    </lineage>
</organism>
<protein>
    <recommendedName>
        <fullName evidence="1">Small ribosomal subunit protein bS18</fullName>
    </recommendedName>
    <alternativeName>
        <fullName evidence="2">30S ribosomal protein S18</fullName>
    </alternativeName>
</protein>